<protein>
    <recommendedName>
        <fullName evidence="1">Galactokinase</fullName>
        <ecNumber evidence="1">2.7.1.6</ecNumber>
    </recommendedName>
    <alternativeName>
        <fullName evidence="1">Galactose kinase</fullName>
    </alternativeName>
</protein>
<name>GAL1_ALIFM</name>
<evidence type="ECO:0000255" key="1">
    <source>
        <dbReference type="HAMAP-Rule" id="MF_00246"/>
    </source>
</evidence>
<organism>
    <name type="scientific">Aliivibrio fischeri (strain MJ11)</name>
    <name type="common">Vibrio fischeri</name>
    <dbReference type="NCBI Taxonomy" id="388396"/>
    <lineage>
        <taxon>Bacteria</taxon>
        <taxon>Pseudomonadati</taxon>
        <taxon>Pseudomonadota</taxon>
        <taxon>Gammaproteobacteria</taxon>
        <taxon>Vibrionales</taxon>
        <taxon>Vibrionaceae</taxon>
        <taxon>Aliivibrio</taxon>
    </lineage>
</organism>
<comment type="function">
    <text evidence="1">Catalyzes the transfer of the gamma-phosphate of ATP to D-galactose to form alpha-D-galactose-1-phosphate (Gal-1-P).</text>
</comment>
<comment type="catalytic activity">
    <reaction evidence="1">
        <text>alpha-D-galactose + ATP = alpha-D-galactose 1-phosphate + ADP + H(+)</text>
        <dbReference type="Rhea" id="RHEA:13553"/>
        <dbReference type="ChEBI" id="CHEBI:15378"/>
        <dbReference type="ChEBI" id="CHEBI:28061"/>
        <dbReference type="ChEBI" id="CHEBI:30616"/>
        <dbReference type="ChEBI" id="CHEBI:58336"/>
        <dbReference type="ChEBI" id="CHEBI:456216"/>
        <dbReference type="EC" id="2.7.1.6"/>
    </reaction>
</comment>
<comment type="pathway">
    <text evidence="1">Carbohydrate metabolism; galactose metabolism.</text>
</comment>
<comment type="subcellular location">
    <subcellularLocation>
        <location evidence="1">Cytoplasm</location>
    </subcellularLocation>
</comment>
<comment type="similarity">
    <text evidence="1">Belongs to the GHMP kinase family. GalK subfamily.</text>
</comment>
<proteinExistence type="inferred from homology"/>
<reference key="1">
    <citation type="submission" date="2008-08" db="EMBL/GenBank/DDBJ databases">
        <title>Complete sequence of Vibrio fischeri strain MJ11.</title>
        <authorList>
            <person name="Mandel M.J."/>
            <person name="Stabb E.V."/>
            <person name="Ruby E.G."/>
            <person name="Ferriera S."/>
            <person name="Johnson J."/>
            <person name="Kravitz S."/>
            <person name="Beeson K."/>
            <person name="Sutton G."/>
            <person name="Rogers Y.-H."/>
            <person name="Friedman R."/>
            <person name="Frazier M."/>
            <person name="Venter J.C."/>
        </authorList>
    </citation>
    <scope>NUCLEOTIDE SEQUENCE [LARGE SCALE GENOMIC DNA]</scope>
    <source>
        <strain>MJ11</strain>
    </source>
</reference>
<accession>B5ETC9</accession>
<keyword id="KW-0067">ATP-binding</keyword>
<keyword id="KW-0119">Carbohydrate metabolism</keyword>
<keyword id="KW-0963">Cytoplasm</keyword>
<keyword id="KW-0299">Galactose metabolism</keyword>
<keyword id="KW-0418">Kinase</keyword>
<keyword id="KW-0460">Magnesium</keyword>
<keyword id="KW-0479">Metal-binding</keyword>
<keyword id="KW-0547">Nucleotide-binding</keyword>
<keyword id="KW-0808">Transferase</keyword>
<feature type="chain" id="PRO_1000100848" description="Galactokinase">
    <location>
        <begin position="1"/>
        <end position="384"/>
    </location>
</feature>
<feature type="active site" description="Proton acceptor" evidence="1">
    <location>
        <position position="175"/>
    </location>
</feature>
<feature type="binding site" evidence="1">
    <location>
        <begin position="35"/>
        <end position="38"/>
    </location>
    <ligand>
        <name>substrate</name>
    </ligand>
</feature>
<feature type="binding site" evidence="1">
    <location>
        <position position="69"/>
    </location>
    <ligand>
        <name>ATP</name>
        <dbReference type="ChEBI" id="CHEBI:30616"/>
    </ligand>
</feature>
<feature type="binding site" evidence="1">
    <location>
        <begin position="125"/>
        <end position="131"/>
    </location>
    <ligand>
        <name>ATP</name>
        <dbReference type="ChEBI" id="CHEBI:30616"/>
    </ligand>
</feature>
<feature type="binding site" evidence="1">
    <location>
        <position position="131"/>
    </location>
    <ligand>
        <name>Mg(2+)</name>
        <dbReference type="ChEBI" id="CHEBI:18420"/>
    </ligand>
</feature>
<feature type="binding site" evidence="1">
    <location>
        <position position="163"/>
    </location>
    <ligand>
        <name>Mg(2+)</name>
        <dbReference type="ChEBI" id="CHEBI:18420"/>
    </ligand>
</feature>
<feature type="binding site" evidence="1">
    <location>
        <position position="224"/>
    </location>
    <ligand>
        <name>substrate</name>
    </ligand>
</feature>
<feature type="site" description="Transition state stabilizer" evidence="1">
    <location>
        <position position="29"/>
    </location>
</feature>
<dbReference type="EC" id="2.7.1.6" evidence="1"/>
<dbReference type="EMBL" id="CP001133">
    <property type="protein sequence ID" value="ACH63857.1"/>
    <property type="molecule type" value="Genomic_DNA"/>
</dbReference>
<dbReference type="RefSeq" id="WP_012535026.1">
    <property type="nucleotide sequence ID" value="NC_011186.1"/>
</dbReference>
<dbReference type="SMR" id="B5ETC9"/>
<dbReference type="KEGG" id="vfm:VFMJ11_A0392"/>
<dbReference type="HOGENOM" id="CLU_017814_2_1_6"/>
<dbReference type="UniPathway" id="UPA00214"/>
<dbReference type="Proteomes" id="UP000001857">
    <property type="component" value="Chromosome II"/>
</dbReference>
<dbReference type="GO" id="GO:0005829">
    <property type="term" value="C:cytosol"/>
    <property type="evidence" value="ECO:0007669"/>
    <property type="project" value="TreeGrafter"/>
</dbReference>
<dbReference type="GO" id="GO:0005524">
    <property type="term" value="F:ATP binding"/>
    <property type="evidence" value="ECO:0007669"/>
    <property type="project" value="UniProtKB-UniRule"/>
</dbReference>
<dbReference type="GO" id="GO:0004335">
    <property type="term" value="F:galactokinase activity"/>
    <property type="evidence" value="ECO:0007669"/>
    <property type="project" value="UniProtKB-UniRule"/>
</dbReference>
<dbReference type="GO" id="GO:0000287">
    <property type="term" value="F:magnesium ion binding"/>
    <property type="evidence" value="ECO:0007669"/>
    <property type="project" value="UniProtKB-UniRule"/>
</dbReference>
<dbReference type="GO" id="GO:0006012">
    <property type="term" value="P:galactose metabolic process"/>
    <property type="evidence" value="ECO:0007669"/>
    <property type="project" value="UniProtKB-UniRule"/>
</dbReference>
<dbReference type="FunFam" id="3.30.230.10:FF:000017">
    <property type="entry name" value="Galactokinase"/>
    <property type="match status" value="1"/>
</dbReference>
<dbReference type="FunFam" id="3.30.70.890:FF:000001">
    <property type="entry name" value="Galactokinase"/>
    <property type="match status" value="1"/>
</dbReference>
<dbReference type="Gene3D" id="3.30.230.10">
    <property type="match status" value="1"/>
</dbReference>
<dbReference type="Gene3D" id="3.30.70.890">
    <property type="entry name" value="GHMP kinase, C-terminal domain"/>
    <property type="match status" value="1"/>
</dbReference>
<dbReference type="HAMAP" id="MF_00246">
    <property type="entry name" value="Galactokinase"/>
    <property type="match status" value="1"/>
</dbReference>
<dbReference type="InterPro" id="IPR000705">
    <property type="entry name" value="Galactokinase"/>
</dbReference>
<dbReference type="InterPro" id="IPR022963">
    <property type="entry name" value="Galactokinase_bac"/>
</dbReference>
<dbReference type="InterPro" id="IPR019741">
    <property type="entry name" value="Galactokinase_CS"/>
</dbReference>
<dbReference type="InterPro" id="IPR019539">
    <property type="entry name" value="GalKase_N"/>
</dbReference>
<dbReference type="InterPro" id="IPR013750">
    <property type="entry name" value="GHMP_kinase_C_dom"/>
</dbReference>
<dbReference type="InterPro" id="IPR036554">
    <property type="entry name" value="GHMP_kinase_C_sf"/>
</dbReference>
<dbReference type="InterPro" id="IPR006204">
    <property type="entry name" value="GHMP_kinase_N_dom"/>
</dbReference>
<dbReference type="InterPro" id="IPR006203">
    <property type="entry name" value="GHMP_knse_ATP-bd_CS"/>
</dbReference>
<dbReference type="InterPro" id="IPR006206">
    <property type="entry name" value="Mevalonate/galactokinase"/>
</dbReference>
<dbReference type="InterPro" id="IPR020568">
    <property type="entry name" value="Ribosomal_Su5_D2-typ_SF"/>
</dbReference>
<dbReference type="InterPro" id="IPR014721">
    <property type="entry name" value="Ribsml_uS5_D2-typ_fold_subgr"/>
</dbReference>
<dbReference type="NCBIfam" id="TIGR00131">
    <property type="entry name" value="gal_kin"/>
    <property type="match status" value="1"/>
</dbReference>
<dbReference type="NCBIfam" id="NF003472">
    <property type="entry name" value="PRK05101.1"/>
    <property type="match status" value="1"/>
</dbReference>
<dbReference type="NCBIfam" id="NF003705">
    <property type="entry name" value="PRK05322.1"/>
    <property type="match status" value="1"/>
</dbReference>
<dbReference type="PANTHER" id="PTHR10457:SF7">
    <property type="entry name" value="GALACTOKINASE-RELATED"/>
    <property type="match status" value="1"/>
</dbReference>
<dbReference type="PANTHER" id="PTHR10457">
    <property type="entry name" value="MEVALONATE KINASE/GALACTOKINASE"/>
    <property type="match status" value="1"/>
</dbReference>
<dbReference type="Pfam" id="PF10509">
    <property type="entry name" value="GalKase_gal_bdg"/>
    <property type="match status" value="1"/>
</dbReference>
<dbReference type="Pfam" id="PF08544">
    <property type="entry name" value="GHMP_kinases_C"/>
    <property type="match status" value="1"/>
</dbReference>
<dbReference type="Pfam" id="PF00288">
    <property type="entry name" value="GHMP_kinases_N"/>
    <property type="match status" value="1"/>
</dbReference>
<dbReference type="PIRSF" id="PIRSF000530">
    <property type="entry name" value="Galactokinase"/>
    <property type="match status" value="1"/>
</dbReference>
<dbReference type="PRINTS" id="PR00473">
    <property type="entry name" value="GALCTOKINASE"/>
</dbReference>
<dbReference type="PRINTS" id="PR00959">
    <property type="entry name" value="MEVGALKINASE"/>
</dbReference>
<dbReference type="SUPFAM" id="SSF55060">
    <property type="entry name" value="GHMP Kinase, C-terminal domain"/>
    <property type="match status" value="1"/>
</dbReference>
<dbReference type="SUPFAM" id="SSF54211">
    <property type="entry name" value="Ribosomal protein S5 domain 2-like"/>
    <property type="match status" value="1"/>
</dbReference>
<dbReference type="PROSITE" id="PS00106">
    <property type="entry name" value="GALACTOKINASE"/>
    <property type="match status" value="1"/>
</dbReference>
<dbReference type="PROSITE" id="PS00627">
    <property type="entry name" value="GHMP_KINASES_ATP"/>
    <property type="match status" value="1"/>
</dbReference>
<gene>
    <name evidence="1" type="primary">galK</name>
    <name type="ordered locus">VFMJ11_A0392</name>
</gene>
<sequence length="384" mass="41851">MTNLIKNVKDAFNSVLSYAPTHILQAPGRVNLIGEHTDYNDGFVLPCAINYQTVVAAAKRDDNIVRVVSVDYGNETDEFDITQEITFQENKMWSNYIRGVVKCLIGRGYEFKGADISVSGNVPQGAGLSSSAALEVVIGQTFKELYNLDISQAEIALNGQQAENEFVGCNCGIMDQMISAEGNENHAMLLDCRSLETTAVSMPEDMSVVIINSNKKRGLVDSEYNTRREQCEEAARIFGVKALRDVTIEEFNAKAHELDEMVAKRARHVITENDRTEEAAKVLASGDMKRMAVLMAESHASMRDDFEITVSEVDTLVDIVKNVIGAEGGVRMTGGGFGGCIVALVPPMLVDEVKAAVEELYEAKTGLKESIYVCQATNGAGLVL</sequence>